<keyword id="KW-0004">4Fe-4S</keyword>
<keyword id="KW-0408">Iron</keyword>
<keyword id="KW-0411">Iron-sulfur</keyword>
<keyword id="KW-0456">Lyase</keyword>
<keyword id="KW-0479">Metal-binding</keyword>
<keyword id="KW-1185">Reference proteome</keyword>
<sequence length="303" mass="32734">MMSESNKQQAVNKLTEIVANFTAMISTRMPDDVVDKLKQLKDAETSSMGKIIYHTMFDNMQKAIDLNRPACQDTGEIMFFVKVGSRFPLLGELQSILKQAVEEATVKAPLRHNAVEIFDEVNTGKNTGSGVPWVTWDIIPDNDDAEIEVYMAGGGCTLPGRSKVLMPSEGYEGVVKFVFENISTLAVNACPPVLVGVGIATSVETAAVLSRKAILRPIGSRHPNPKAAELELRLEEGLNRLGIGPQGLTGNSSVMGVHIESAARHPSTIGVAVSTGCWAHRRGTLLVHADLTFENLSHTRSAL</sequence>
<evidence type="ECO:0000250" key="1">
    <source>
        <dbReference type="UniProtKB" id="E9AE57"/>
    </source>
</evidence>
<evidence type="ECO:0000269" key="2">
    <source>
    </source>
</evidence>
<evidence type="ECO:0000269" key="3">
    <source>
    </source>
</evidence>
<evidence type="ECO:0000305" key="4"/>
<evidence type="ECO:0000305" key="5">
    <source>
    </source>
</evidence>
<organism>
    <name type="scientific">Escherichia coli (strain K12)</name>
    <dbReference type="NCBI Taxonomy" id="83333"/>
    <lineage>
        <taxon>Bacteria</taxon>
        <taxon>Pseudomonadati</taxon>
        <taxon>Pseudomonadota</taxon>
        <taxon>Gammaproteobacteria</taxon>
        <taxon>Enterobacterales</taxon>
        <taxon>Enterobacteriaceae</taxon>
        <taxon>Escherichia</taxon>
    </lineage>
</organism>
<dbReference type="EC" id="4.2.1.32"/>
<dbReference type="EMBL" id="L14781">
    <property type="protein sequence ID" value="AAA03061.1"/>
    <property type="molecule type" value="Unassigned_DNA"/>
</dbReference>
<dbReference type="EMBL" id="M16194">
    <property type="protein sequence ID" value="AAA72573.1"/>
    <property type="status" value="ALT_FRAME"/>
    <property type="molecule type" value="Genomic_DNA"/>
</dbReference>
<dbReference type="EMBL" id="U28379">
    <property type="protein sequence ID" value="AAA89141.1"/>
    <property type="molecule type" value="Genomic_DNA"/>
</dbReference>
<dbReference type="EMBL" id="U00096">
    <property type="protein sequence ID" value="AAC76097.1"/>
    <property type="molecule type" value="Genomic_DNA"/>
</dbReference>
<dbReference type="EMBL" id="AP009048">
    <property type="protein sequence ID" value="BAE77112.1"/>
    <property type="molecule type" value="Genomic_DNA"/>
</dbReference>
<dbReference type="PIR" id="C65094">
    <property type="entry name" value="QQECRT"/>
</dbReference>
<dbReference type="RefSeq" id="NP_417533.1">
    <property type="nucleotide sequence ID" value="NC_000913.3"/>
</dbReference>
<dbReference type="RefSeq" id="WP_000986797.1">
    <property type="nucleotide sequence ID" value="NZ_LN832404.1"/>
</dbReference>
<dbReference type="SMR" id="P05847"/>
<dbReference type="BioGRID" id="4263296">
    <property type="interactions" value="23"/>
</dbReference>
<dbReference type="ComplexPortal" id="CPX-5912">
    <property type="entry name" value="L-tartrate dehydratase complex"/>
</dbReference>
<dbReference type="FunCoup" id="P05847">
    <property type="interactions" value="121"/>
</dbReference>
<dbReference type="IntAct" id="P05847">
    <property type="interactions" value="6"/>
</dbReference>
<dbReference type="STRING" id="511145.b3061"/>
<dbReference type="PaxDb" id="511145-b3061"/>
<dbReference type="EnsemblBacteria" id="AAC76097">
    <property type="protein sequence ID" value="AAC76097"/>
    <property type="gene ID" value="b3061"/>
</dbReference>
<dbReference type="GeneID" id="93778932"/>
<dbReference type="GeneID" id="947565"/>
<dbReference type="KEGG" id="ecj:JW3033"/>
<dbReference type="KEGG" id="eco:b3061"/>
<dbReference type="PATRIC" id="fig|1411691.4.peg.3670"/>
<dbReference type="EchoBASE" id="EB1156"/>
<dbReference type="eggNOG" id="COG1951">
    <property type="taxonomic scope" value="Bacteria"/>
</dbReference>
<dbReference type="HOGENOM" id="CLU_041245_1_0_6"/>
<dbReference type="InParanoid" id="P05847"/>
<dbReference type="OMA" id="YPCHIAS"/>
<dbReference type="OrthoDB" id="9798978at2"/>
<dbReference type="PhylomeDB" id="P05847"/>
<dbReference type="BioCyc" id="EcoCyc:TTDA-MONOMER"/>
<dbReference type="BioCyc" id="MetaCyc:TTDA-MONOMER"/>
<dbReference type="PRO" id="PR:P05847"/>
<dbReference type="Proteomes" id="UP000000625">
    <property type="component" value="Chromosome"/>
</dbReference>
<dbReference type="GO" id="GO:1902494">
    <property type="term" value="C:catalytic complex"/>
    <property type="evidence" value="ECO:0000303"/>
    <property type="project" value="ComplexPortal"/>
</dbReference>
<dbReference type="GO" id="GO:0005829">
    <property type="term" value="C:cytosol"/>
    <property type="evidence" value="ECO:0000318"/>
    <property type="project" value="GO_Central"/>
</dbReference>
<dbReference type="GO" id="GO:0051539">
    <property type="term" value="F:4 iron, 4 sulfur cluster binding"/>
    <property type="evidence" value="ECO:0007669"/>
    <property type="project" value="UniProtKB-KW"/>
</dbReference>
<dbReference type="GO" id="GO:0004333">
    <property type="term" value="F:fumarate hydratase activity"/>
    <property type="evidence" value="ECO:0000318"/>
    <property type="project" value="GO_Central"/>
</dbReference>
<dbReference type="GO" id="GO:0008730">
    <property type="term" value="F:L(+)-tartrate dehydratase activity"/>
    <property type="evidence" value="ECO:0007669"/>
    <property type="project" value="UniProtKB-EC"/>
</dbReference>
<dbReference type="GO" id="GO:0046872">
    <property type="term" value="F:metal ion binding"/>
    <property type="evidence" value="ECO:0007669"/>
    <property type="project" value="UniProtKB-KW"/>
</dbReference>
<dbReference type="GO" id="GO:0044010">
    <property type="term" value="P:single-species biofilm formation"/>
    <property type="evidence" value="ECO:0000315"/>
    <property type="project" value="EcoCyc"/>
</dbReference>
<dbReference type="GO" id="GO:1901276">
    <property type="term" value="P:tartrate catabolic process"/>
    <property type="evidence" value="ECO:0000303"/>
    <property type="project" value="ComplexPortal"/>
</dbReference>
<dbReference type="GO" id="GO:1901275">
    <property type="term" value="P:tartrate metabolic process"/>
    <property type="evidence" value="ECO:0000315"/>
    <property type="project" value="EcoCyc"/>
</dbReference>
<dbReference type="GO" id="GO:0006099">
    <property type="term" value="P:tricarboxylic acid cycle"/>
    <property type="evidence" value="ECO:0000318"/>
    <property type="project" value="GO_Central"/>
</dbReference>
<dbReference type="InterPro" id="IPR051208">
    <property type="entry name" value="Class-I_Fumarase/Tartrate_DH"/>
</dbReference>
<dbReference type="InterPro" id="IPR004646">
    <property type="entry name" value="Fe-S_hydro-lyase_TtdA-typ_cat"/>
</dbReference>
<dbReference type="NCBIfam" id="NF006084">
    <property type="entry name" value="PRK08230.1"/>
    <property type="match status" value="1"/>
</dbReference>
<dbReference type="NCBIfam" id="TIGR00722">
    <property type="entry name" value="ttdA_fumA_fumB"/>
    <property type="match status" value="1"/>
</dbReference>
<dbReference type="PANTHER" id="PTHR30389">
    <property type="entry name" value="FUMARATE HYDRATASE-RELATED"/>
    <property type="match status" value="1"/>
</dbReference>
<dbReference type="PANTHER" id="PTHR30389:SF19">
    <property type="entry name" value="L(+)-TARTRATE DEHYDRATASE SUBUNIT ALPHA"/>
    <property type="match status" value="1"/>
</dbReference>
<dbReference type="Pfam" id="PF05681">
    <property type="entry name" value="Fumerase"/>
    <property type="match status" value="1"/>
</dbReference>
<protein>
    <recommendedName>
        <fullName>L(+)-tartrate dehydratase subunit alpha</fullName>
        <shortName>L-TTD alpha</shortName>
        <ecNumber>4.2.1.32</ecNumber>
    </recommendedName>
</protein>
<proteinExistence type="evidence at protein level"/>
<accession>P05847</accession>
<accession>P33130</accession>
<accession>Q2M9E4</accession>
<gene>
    <name type="primary">ttdA</name>
    <name type="synonym">ygjA</name>
    <name type="ordered locus">b3061</name>
    <name type="ordered locus">JW3033</name>
</gene>
<feature type="chain" id="PRO_0000195663" description="L(+)-tartrate dehydratase subunit alpha">
    <location>
        <begin position="1"/>
        <end position="303"/>
    </location>
</feature>
<feature type="binding site" evidence="1">
    <location>
        <position position="71"/>
    </location>
    <ligand>
        <name>iron-sulfur cluster</name>
        <dbReference type="ChEBI" id="CHEBI:30408"/>
    </ligand>
</feature>
<feature type="binding site" evidence="1">
    <location>
        <position position="190"/>
    </location>
    <ligand>
        <name>iron-sulfur cluster</name>
        <dbReference type="ChEBI" id="CHEBI:30408"/>
    </ligand>
</feature>
<feature type="binding site" evidence="1">
    <location>
        <position position="277"/>
    </location>
    <ligand>
        <name>iron-sulfur cluster</name>
        <dbReference type="ChEBI" id="CHEBI:30408"/>
    </ligand>
</feature>
<feature type="sequence conflict" description="In Ref. 1 and 2." evidence="4" ref="1 2">
    <original>V</original>
    <variation>L</variation>
    <location>
        <position position="11"/>
    </location>
</feature>
<feature type="sequence conflict" description="In Ref. 1 and 2." evidence="4" ref="1 2">
    <original>EL</original>
    <variation>DV</variation>
    <location>
        <begin position="231"/>
        <end position="232"/>
    </location>
</feature>
<reference key="1">
    <citation type="journal article" date="1993" name="J. Gen. Microbiol.">
        <title>Identification of the L-tartrate dehydratase genes (ttdA and ttdB) of Escherichia coli and evolutionary relationship with the class I fumarase genes.</title>
        <authorList>
            <person name="Reaney S.K."/>
            <person name="Begg C."/>
            <person name="Bungard S.I."/>
            <person name="Guest J.R."/>
        </authorList>
    </citation>
    <scope>NUCLEOTIDE SEQUENCE [GENOMIC DNA]</scope>
    <scope>CATALYTIC ACTIVITY</scope>
    <scope>SUBUNIT</scope>
    <scope>COFACTOR</scope>
    <source>
        <strain>K12 / W3110 / ATCC 27325 / DSM 5911</strain>
    </source>
</reference>
<reference key="2">
    <citation type="journal article" date="1987" name="Gene">
        <title>Possible new genes as revealed by molecular analysis of a 5-kb Escherichia coli chromosomal region 5' to the rpsU-dnaG-rpoD macromolecular-synthesis operon.</title>
        <authorList>
            <person name="Nesin M."/>
            <person name="Lupski J.R."/>
            <person name="Svec P."/>
            <person name="Godson G.N."/>
        </authorList>
    </citation>
    <scope>NUCLEOTIDE SEQUENCE [GENOMIC DNA]</scope>
</reference>
<reference key="3">
    <citation type="journal article" date="1997" name="Science">
        <title>The complete genome sequence of Escherichia coli K-12.</title>
        <authorList>
            <person name="Blattner F.R."/>
            <person name="Plunkett G. III"/>
            <person name="Bloch C.A."/>
            <person name="Perna N.T."/>
            <person name="Burland V."/>
            <person name="Riley M."/>
            <person name="Collado-Vides J."/>
            <person name="Glasner J.D."/>
            <person name="Rode C.K."/>
            <person name="Mayhew G.F."/>
            <person name="Gregor J."/>
            <person name="Davis N.W."/>
            <person name="Kirkpatrick H.A."/>
            <person name="Goeden M.A."/>
            <person name="Rose D.J."/>
            <person name="Mau B."/>
            <person name="Shao Y."/>
        </authorList>
    </citation>
    <scope>NUCLEOTIDE SEQUENCE [LARGE SCALE GENOMIC DNA]</scope>
    <source>
        <strain>K12 / MG1655 / ATCC 47076</strain>
    </source>
</reference>
<reference key="4">
    <citation type="journal article" date="2006" name="Mol. Syst. Biol.">
        <title>Highly accurate genome sequences of Escherichia coli K-12 strains MG1655 and W3110.</title>
        <authorList>
            <person name="Hayashi K."/>
            <person name="Morooka N."/>
            <person name="Yamamoto Y."/>
            <person name="Fujita K."/>
            <person name="Isono K."/>
            <person name="Choi S."/>
            <person name="Ohtsubo E."/>
            <person name="Baba T."/>
            <person name="Wanner B.L."/>
            <person name="Mori H."/>
            <person name="Horiuchi T."/>
        </authorList>
    </citation>
    <scope>NUCLEOTIDE SEQUENCE [LARGE SCALE GENOMIC DNA]</scope>
    <source>
        <strain>K12 / W3110 / ATCC 27325 / DSM 5911</strain>
    </source>
</reference>
<reference key="5">
    <citation type="journal article" date="2006" name="Microbiology">
        <title>Functional identification of ygiP as a positive regulator of the ttdA-ttdB-ygjE operon.</title>
        <authorList>
            <person name="Oshima T."/>
            <person name="Biville F."/>
        </authorList>
    </citation>
    <scope>INDUCTION</scope>
</reference>
<comment type="catalytic activity">
    <reaction evidence="3">
        <text>(2R,3R)-tartrate = oxaloacetate + H2O</text>
        <dbReference type="Rhea" id="RHEA:15413"/>
        <dbReference type="ChEBI" id="CHEBI:15377"/>
        <dbReference type="ChEBI" id="CHEBI:16452"/>
        <dbReference type="ChEBI" id="CHEBI:30924"/>
        <dbReference type="EC" id="4.2.1.32"/>
    </reaction>
</comment>
<comment type="cofactor">
    <cofactor evidence="3">
        <name>iron-sulfur cluster</name>
        <dbReference type="ChEBI" id="CHEBI:30408"/>
    </cofactor>
</comment>
<comment type="subunit">
    <text evidence="5">Tetramer of two alpha and two beta subunits.</text>
</comment>
<comment type="interaction">
    <interactant intactId="EBI-1113137">
        <id>P05847</id>
    </interactant>
    <interactant intactId="EBI-1123685">
        <id>P0ACL0</id>
        <label>glpR</label>
    </interactant>
    <organismsDiffer>false</organismsDiffer>
    <experiments>2</experiments>
</comment>
<comment type="induction">
    <text evidence="2">Induced by tartrate, via TtdR.</text>
</comment>
<comment type="similarity">
    <text evidence="4">Belongs to the class-I fumarase family.</text>
</comment>
<comment type="sequence caution" evidence="4">
    <conflict type="frameshift">
        <sequence resource="EMBL-CDS" id="AAA72573"/>
    </conflict>
</comment>
<name>TTDA_ECOLI</name>